<name>RIMK1_SHEFN</name>
<protein>
    <recommendedName>
        <fullName evidence="1">Probable alpha-L-glutamate ligase 1</fullName>
        <ecNumber evidence="1">6.3.2.-</ecNumber>
    </recommendedName>
</protein>
<sequence>MHIAIMSRNKNLYSTSRLKEAAEARGHVIKIVDPLKCYMNINMNAPSIHVRGEELPKFDAVIPRIGASVTFYGTAVLRQFEMMGTHPLNESVAITRSRDKLRSLQLLSRKNIGLPVTGFASKPADIPDLLDMVGGAPCVIKLLEGTQGIGVVLAETRKAAESVIEAFMGLKANIMVQEYIAEAGGADIRCFVIGDKVIAAMKRQALPGEFRSNLHRGGSASIVKLTPEERSTALRAAKTMGLNVAGVDILRSKHGPLVMEVNSSPGLEGIEKATGIDVAEKIIQFIEKNVKSTSSKTKGVG</sequence>
<evidence type="ECO:0000255" key="1">
    <source>
        <dbReference type="HAMAP-Rule" id="MF_01552"/>
    </source>
</evidence>
<keyword id="KW-0067">ATP-binding</keyword>
<keyword id="KW-0436">Ligase</keyword>
<keyword id="KW-0460">Magnesium</keyword>
<keyword id="KW-0464">Manganese</keyword>
<keyword id="KW-0479">Metal-binding</keyword>
<keyword id="KW-0547">Nucleotide-binding</keyword>
<keyword id="KW-0648">Protein biosynthesis</keyword>
<keyword id="KW-1185">Reference proteome</keyword>
<feature type="chain" id="PRO_0000340556" description="Probable alpha-L-glutamate ligase 1">
    <location>
        <begin position="1"/>
        <end position="301"/>
    </location>
</feature>
<feature type="domain" description="ATP-grasp" evidence="1">
    <location>
        <begin position="104"/>
        <end position="287"/>
    </location>
</feature>
<feature type="binding site" evidence="1">
    <location>
        <position position="141"/>
    </location>
    <ligand>
        <name>ATP</name>
        <dbReference type="ChEBI" id="CHEBI:30616"/>
    </ligand>
</feature>
<feature type="binding site" evidence="1">
    <location>
        <begin position="178"/>
        <end position="179"/>
    </location>
    <ligand>
        <name>ATP</name>
        <dbReference type="ChEBI" id="CHEBI:30616"/>
    </ligand>
</feature>
<feature type="binding site" evidence="1">
    <location>
        <position position="187"/>
    </location>
    <ligand>
        <name>ATP</name>
        <dbReference type="ChEBI" id="CHEBI:30616"/>
    </ligand>
</feature>
<feature type="binding site" evidence="1">
    <location>
        <begin position="211"/>
        <end position="213"/>
    </location>
    <ligand>
        <name>ATP</name>
        <dbReference type="ChEBI" id="CHEBI:30616"/>
    </ligand>
</feature>
<feature type="binding site" evidence="1">
    <location>
        <position position="248"/>
    </location>
    <ligand>
        <name>Mg(2+)</name>
        <dbReference type="ChEBI" id="CHEBI:18420"/>
        <label>1</label>
    </ligand>
</feature>
<feature type="binding site" evidence="1">
    <location>
        <position position="248"/>
    </location>
    <ligand>
        <name>Mn(2+)</name>
        <dbReference type="ChEBI" id="CHEBI:29035"/>
        <label>1</label>
    </ligand>
</feature>
<feature type="binding site" evidence="1">
    <location>
        <position position="260"/>
    </location>
    <ligand>
        <name>Mg(2+)</name>
        <dbReference type="ChEBI" id="CHEBI:18420"/>
        <label>1</label>
    </ligand>
</feature>
<feature type="binding site" evidence="1">
    <location>
        <position position="260"/>
    </location>
    <ligand>
        <name>Mg(2+)</name>
        <dbReference type="ChEBI" id="CHEBI:18420"/>
        <label>2</label>
    </ligand>
</feature>
<feature type="binding site" evidence="1">
    <location>
        <position position="260"/>
    </location>
    <ligand>
        <name>Mn(2+)</name>
        <dbReference type="ChEBI" id="CHEBI:29035"/>
        <label>1</label>
    </ligand>
</feature>
<feature type="binding site" evidence="1">
    <location>
        <position position="260"/>
    </location>
    <ligand>
        <name>Mn(2+)</name>
        <dbReference type="ChEBI" id="CHEBI:29035"/>
        <label>2</label>
    </ligand>
</feature>
<feature type="binding site" evidence="1">
    <location>
        <position position="262"/>
    </location>
    <ligand>
        <name>Mg(2+)</name>
        <dbReference type="ChEBI" id="CHEBI:18420"/>
        <label>2</label>
    </ligand>
</feature>
<feature type="binding site" evidence="1">
    <location>
        <position position="262"/>
    </location>
    <ligand>
        <name>Mn(2+)</name>
        <dbReference type="ChEBI" id="CHEBI:29035"/>
        <label>2</label>
    </ligand>
</feature>
<reference key="1">
    <citation type="submission" date="2006-08" db="EMBL/GenBank/DDBJ databases">
        <title>Complete sequence of Shewanella frigidimarina NCIMB 400.</title>
        <authorList>
            <consortium name="US DOE Joint Genome Institute"/>
            <person name="Copeland A."/>
            <person name="Lucas S."/>
            <person name="Lapidus A."/>
            <person name="Barry K."/>
            <person name="Detter J.C."/>
            <person name="Glavina del Rio T."/>
            <person name="Hammon N."/>
            <person name="Israni S."/>
            <person name="Dalin E."/>
            <person name="Tice H."/>
            <person name="Pitluck S."/>
            <person name="Fredrickson J.K."/>
            <person name="Kolker E."/>
            <person name="McCuel L.A."/>
            <person name="DiChristina T."/>
            <person name="Nealson K.H."/>
            <person name="Newman D."/>
            <person name="Tiedje J.M."/>
            <person name="Zhou J."/>
            <person name="Romine M.F."/>
            <person name="Culley D.E."/>
            <person name="Serres M."/>
            <person name="Chertkov O."/>
            <person name="Brettin T."/>
            <person name="Bruce D."/>
            <person name="Han C."/>
            <person name="Tapia R."/>
            <person name="Gilna P."/>
            <person name="Schmutz J."/>
            <person name="Larimer F."/>
            <person name="Land M."/>
            <person name="Hauser L."/>
            <person name="Kyrpides N."/>
            <person name="Mikhailova N."/>
            <person name="Richardson P."/>
        </authorList>
    </citation>
    <scope>NUCLEOTIDE SEQUENCE [LARGE SCALE GENOMIC DNA]</scope>
    <source>
        <strain>NCIMB 400</strain>
    </source>
</reference>
<accession>Q085K0</accession>
<gene>
    <name evidence="1" type="primary">rimK1</name>
    <name type="ordered locus">Sfri_1212</name>
</gene>
<dbReference type="EC" id="6.3.2.-" evidence="1"/>
<dbReference type="EMBL" id="CP000447">
    <property type="protein sequence ID" value="ABI71065.1"/>
    <property type="molecule type" value="Genomic_DNA"/>
</dbReference>
<dbReference type="SMR" id="Q085K0"/>
<dbReference type="STRING" id="318167.Sfri_1212"/>
<dbReference type="KEGG" id="sfr:Sfri_1212"/>
<dbReference type="eggNOG" id="COG0189">
    <property type="taxonomic scope" value="Bacteria"/>
</dbReference>
<dbReference type="HOGENOM" id="CLU_054353_0_1_6"/>
<dbReference type="OrthoDB" id="3865600at2"/>
<dbReference type="Proteomes" id="UP000000684">
    <property type="component" value="Chromosome"/>
</dbReference>
<dbReference type="GO" id="GO:0005737">
    <property type="term" value="C:cytoplasm"/>
    <property type="evidence" value="ECO:0007669"/>
    <property type="project" value="TreeGrafter"/>
</dbReference>
<dbReference type="GO" id="GO:0005524">
    <property type="term" value="F:ATP binding"/>
    <property type="evidence" value="ECO:0007669"/>
    <property type="project" value="UniProtKB-UniRule"/>
</dbReference>
<dbReference type="GO" id="GO:0046872">
    <property type="term" value="F:metal ion binding"/>
    <property type="evidence" value="ECO:0007669"/>
    <property type="project" value="UniProtKB-KW"/>
</dbReference>
<dbReference type="GO" id="GO:0018169">
    <property type="term" value="F:ribosomal S6-glutamic acid ligase activity"/>
    <property type="evidence" value="ECO:0007669"/>
    <property type="project" value="TreeGrafter"/>
</dbReference>
<dbReference type="GO" id="GO:0036211">
    <property type="term" value="P:protein modification process"/>
    <property type="evidence" value="ECO:0007669"/>
    <property type="project" value="InterPro"/>
</dbReference>
<dbReference type="GO" id="GO:0009432">
    <property type="term" value="P:SOS response"/>
    <property type="evidence" value="ECO:0007669"/>
    <property type="project" value="TreeGrafter"/>
</dbReference>
<dbReference type="GO" id="GO:0006412">
    <property type="term" value="P:translation"/>
    <property type="evidence" value="ECO:0007669"/>
    <property type="project" value="UniProtKB-KW"/>
</dbReference>
<dbReference type="FunFam" id="3.40.50.20:FF:000004">
    <property type="entry name" value="Probable alpha-L-glutamate ligase"/>
    <property type="match status" value="1"/>
</dbReference>
<dbReference type="FunFam" id="3.30.1490.20:FF:000005">
    <property type="entry name" value="Probable alpha-L-glutamate ligase 1"/>
    <property type="match status" value="1"/>
</dbReference>
<dbReference type="FunFam" id="3.30.470.20:FF:000016">
    <property type="entry name" value="Ribosomal protein S6--L-glutamate ligase"/>
    <property type="match status" value="1"/>
</dbReference>
<dbReference type="Gene3D" id="3.40.50.20">
    <property type="match status" value="1"/>
</dbReference>
<dbReference type="Gene3D" id="3.30.1490.20">
    <property type="entry name" value="ATP-grasp fold, A domain"/>
    <property type="match status" value="1"/>
</dbReference>
<dbReference type="Gene3D" id="3.30.470.20">
    <property type="entry name" value="ATP-grasp fold, B domain"/>
    <property type="match status" value="1"/>
</dbReference>
<dbReference type="HAMAP" id="MF_01552">
    <property type="entry name" value="RimK"/>
    <property type="match status" value="1"/>
</dbReference>
<dbReference type="InterPro" id="IPR011761">
    <property type="entry name" value="ATP-grasp"/>
</dbReference>
<dbReference type="InterPro" id="IPR013651">
    <property type="entry name" value="ATP-grasp_RimK-type"/>
</dbReference>
<dbReference type="InterPro" id="IPR013815">
    <property type="entry name" value="ATP_grasp_subdomain_1"/>
</dbReference>
<dbReference type="InterPro" id="IPR023533">
    <property type="entry name" value="RimK"/>
</dbReference>
<dbReference type="InterPro" id="IPR041107">
    <property type="entry name" value="Rimk_N"/>
</dbReference>
<dbReference type="InterPro" id="IPR004666">
    <property type="entry name" value="Rp_bS6_RimK/Lys_biosynth_LsyX"/>
</dbReference>
<dbReference type="NCBIfam" id="NF007764">
    <property type="entry name" value="PRK10446.1"/>
    <property type="match status" value="1"/>
</dbReference>
<dbReference type="NCBIfam" id="TIGR00768">
    <property type="entry name" value="rimK_fam"/>
    <property type="match status" value="1"/>
</dbReference>
<dbReference type="PANTHER" id="PTHR21621:SF7">
    <property type="entry name" value="RIBOSOMAL PROTEIN BS6--L-GLUTAMATE LIGASE"/>
    <property type="match status" value="1"/>
</dbReference>
<dbReference type="PANTHER" id="PTHR21621">
    <property type="entry name" value="RIBOSOMAL PROTEIN S6 MODIFICATION PROTEIN"/>
    <property type="match status" value="1"/>
</dbReference>
<dbReference type="Pfam" id="PF08443">
    <property type="entry name" value="RimK"/>
    <property type="match status" value="1"/>
</dbReference>
<dbReference type="Pfam" id="PF18030">
    <property type="entry name" value="Rimk_N"/>
    <property type="match status" value="1"/>
</dbReference>
<dbReference type="SUPFAM" id="SSF56059">
    <property type="entry name" value="Glutathione synthetase ATP-binding domain-like"/>
    <property type="match status" value="1"/>
</dbReference>
<dbReference type="PROSITE" id="PS50975">
    <property type="entry name" value="ATP_GRASP"/>
    <property type="match status" value="1"/>
</dbReference>
<organism>
    <name type="scientific">Shewanella frigidimarina (strain NCIMB 400)</name>
    <dbReference type="NCBI Taxonomy" id="318167"/>
    <lineage>
        <taxon>Bacteria</taxon>
        <taxon>Pseudomonadati</taxon>
        <taxon>Pseudomonadota</taxon>
        <taxon>Gammaproteobacteria</taxon>
        <taxon>Alteromonadales</taxon>
        <taxon>Shewanellaceae</taxon>
        <taxon>Shewanella</taxon>
    </lineage>
</organism>
<proteinExistence type="inferred from homology"/>
<comment type="cofactor">
    <cofactor evidence="1">
        <name>Mg(2+)</name>
        <dbReference type="ChEBI" id="CHEBI:18420"/>
    </cofactor>
    <cofactor evidence="1">
        <name>Mn(2+)</name>
        <dbReference type="ChEBI" id="CHEBI:29035"/>
    </cofactor>
    <text evidence="1">Binds 2 magnesium or manganese ions per subunit.</text>
</comment>
<comment type="similarity">
    <text evidence="1">Belongs to the RimK family.</text>
</comment>